<reference key="1">
    <citation type="journal article" date="2008" name="Proc. Natl. Acad. Sci. U.S.A.">
        <title>Niche adaptation and genome expansion in the chlorophyll d-producing cyanobacterium Acaryochloris marina.</title>
        <authorList>
            <person name="Swingley W.D."/>
            <person name="Chen M."/>
            <person name="Cheung P.C."/>
            <person name="Conrad A.L."/>
            <person name="Dejesa L.C."/>
            <person name="Hao J."/>
            <person name="Honchak B.M."/>
            <person name="Karbach L.E."/>
            <person name="Kurdoglu A."/>
            <person name="Lahiri S."/>
            <person name="Mastrian S.D."/>
            <person name="Miyashita H."/>
            <person name="Page L."/>
            <person name="Ramakrishna P."/>
            <person name="Satoh S."/>
            <person name="Sattley W.M."/>
            <person name="Shimada Y."/>
            <person name="Taylor H.L."/>
            <person name="Tomo T."/>
            <person name="Tsuchiya T."/>
            <person name="Wang Z.T."/>
            <person name="Raymond J."/>
            <person name="Mimuro M."/>
            <person name="Blankenship R.E."/>
            <person name="Touchman J.W."/>
        </authorList>
    </citation>
    <scope>NUCLEOTIDE SEQUENCE [LARGE SCALE GENOMIC DNA]</scope>
    <source>
        <strain>MBIC 11017</strain>
    </source>
</reference>
<comment type="similarity">
    <text evidence="1">Belongs to the bacterial ribosomal protein bL32 family.</text>
</comment>
<evidence type="ECO:0000255" key="1">
    <source>
        <dbReference type="HAMAP-Rule" id="MF_00340"/>
    </source>
</evidence>
<evidence type="ECO:0000256" key="2">
    <source>
        <dbReference type="SAM" id="MobiDB-lite"/>
    </source>
</evidence>
<evidence type="ECO:0000305" key="3"/>
<organism>
    <name type="scientific">Acaryochloris marina (strain MBIC 11017)</name>
    <dbReference type="NCBI Taxonomy" id="329726"/>
    <lineage>
        <taxon>Bacteria</taxon>
        <taxon>Bacillati</taxon>
        <taxon>Cyanobacteriota</taxon>
        <taxon>Cyanophyceae</taxon>
        <taxon>Acaryochloridales</taxon>
        <taxon>Acaryochloridaceae</taxon>
        <taxon>Acaryochloris</taxon>
    </lineage>
</organism>
<gene>
    <name evidence="1" type="primary">rpmF</name>
    <name evidence="1" type="synonym">rpl32</name>
    <name type="ordered locus">AM1_2937</name>
</gene>
<feature type="chain" id="PRO_1000079317" description="Large ribosomal subunit protein bL32">
    <location>
        <begin position="1"/>
        <end position="59"/>
    </location>
</feature>
<feature type="region of interest" description="Disordered" evidence="2">
    <location>
        <begin position="1"/>
        <end position="59"/>
    </location>
</feature>
<feature type="compositionally biased region" description="Basic residues" evidence="2">
    <location>
        <begin position="1"/>
        <end position="22"/>
    </location>
</feature>
<keyword id="KW-1185">Reference proteome</keyword>
<keyword id="KW-0687">Ribonucleoprotein</keyword>
<keyword id="KW-0689">Ribosomal protein</keyword>
<dbReference type="EMBL" id="CP000828">
    <property type="protein sequence ID" value="ABW27934.1"/>
    <property type="molecule type" value="Genomic_DNA"/>
</dbReference>
<dbReference type="RefSeq" id="WP_010476021.1">
    <property type="nucleotide sequence ID" value="NC_009925.1"/>
</dbReference>
<dbReference type="SMR" id="B0CBE9"/>
<dbReference type="STRING" id="329726.AM1_2937"/>
<dbReference type="KEGG" id="amr:AM1_2937"/>
<dbReference type="eggNOG" id="COG0333">
    <property type="taxonomic scope" value="Bacteria"/>
</dbReference>
<dbReference type="HOGENOM" id="CLU_199882_0_0_3"/>
<dbReference type="OrthoDB" id="541730at2"/>
<dbReference type="Proteomes" id="UP000000268">
    <property type="component" value="Chromosome"/>
</dbReference>
<dbReference type="GO" id="GO:0015934">
    <property type="term" value="C:large ribosomal subunit"/>
    <property type="evidence" value="ECO:0007669"/>
    <property type="project" value="InterPro"/>
</dbReference>
<dbReference type="GO" id="GO:0003735">
    <property type="term" value="F:structural constituent of ribosome"/>
    <property type="evidence" value="ECO:0007669"/>
    <property type="project" value="InterPro"/>
</dbReference>
<dbReference type="GO" id="GO:0006412">
    <property type="term" value="P:translation"/>
    <property type="evidence" value="ECO:0007669"/>
    <property type="project" value="UniProtKB-UniRule"/>
</dbReference>
<dbReference type="Gene3D" id="1.20.5.640">
    <property type="entry name" value="Single helix bin"/>
    <property type="match status" value="1"/>
</dbReference>
<dbReference type="HAMAP" id="MF_00340">
    <property type="entry name" value="Ribosomal_bL32"/>
    <property type="match status" value="1"/>
</dbReference>
<dbReference type="InterPro" id="IPR002677">
    <property type="entry name" value="Ribosomal_bL32"/>
</dbReference>
<dbReference type="InterPro" id="IPR044958">
    <property type="entry name" value="Ribosomal_bL32_plant/cyanobact"/>
</dbReference>
<dbReference type="InterPro" id="IPR011332">
    <property type="entry name" value="Ribosomal_zn-bd"/>
</dbReference>
<dbReference type="NCBIfam" id="TIGR01031">
    <property type="entry name" value="rpmF_bact"/>
    <property type="match status" value="1"/>
</dbReference>
<dbReference type="PANTHER" id="PTHR36083">
    <property type="entry name" value="50S RIBOSOMAL PROTEIN L32, CHLOROPLASTIC"/>
    <property type="match status" value="1"/>
</dbReference>
<dbReference type="PANTHER" id="PTHR36083:SF1">
    <property type="entry name" value="LARGE RIBOSOMAL SUBUNIT PROTEIN BL32C"/>
    <property type="match status" value="1"/>
</dbReference>
<dbReference type="Pfam" id="PF01783">
    <property type="entry name" value="Ribosomal_L32p"/>
    <property type="match status" value="1"/>
</dbReference>
<dbReference type="SUPFAM" id="SSF57829">
    <property type="entry name" value="Zn-binding ribosomal proteins"/>
    <property type="match status" value="1"/>
</dbReference>
<name>RL32_ACAM1</name>
<accession>B0CBE9</accession>
<protein>
    <recommendedName>
        <fullName evidence="1">Large ribosomal subunit protein bL32</fullName>
    </recommendedName>
    <alternativeName>
        <fullName evidence="3">50S ribosomal protein L32</fullName>
    </alternativeName>
</protein>
<proteinExistence type="inferred from homology"/>
<sequence length="59" mass="6663">MAVPKKKTSNSKRDSRRAHWNRKANLAAQRALSTGKSILTGRAKGFEYPTKDDDEDDDE</sequence>